<organism>
    <name type="scientific">Ureaplasma parvum serovar 3 (strain ATCC 700970)</name>
    <dbReference type="NCBI Taxonomy" id="273119"/>
    <lineage>
        <taxon>Bacteria</taxon>
        <taxon>Bacillati</taxon>
        <taxon>Mycoplasmatota</taxon>
        <taxon>Mycoplasmoidales</taxon>
        <taxon>Mycoplasmoidaceae</taxon>
        <taxon>Ureaplasma</taxon>
    </lineage>
</organism>
<sequence>MNKIIKFHNERIKWLWILTAILAISFFVICFNNVKWIYTENTAKYELLTSSLEKIVKFYSFSLVDKPFARGVPNSIDVFSRAIIGVAFGLGFVGTMLIDYFIISKVAYIVKQKIKQSKKVGM</sequence>
<feature type="chain" id="PRO_0000220823" description="Uncharacterized protein UU165.2">
    <location>
        <begin position="1"/>
        <end position="122"/>
    </location>
</feature>
<feature type="transmembrane region" description="Helical" evidence="1">
    <location>
        <begin position="14"/>
        <end position="34"/>
    </location>
</feature>
<feature type="transmembrane region" description="Helical" evidence="1">
    <location>
        <begin position="83"/>
        <end position="103"/>
    </location>
</feature>
<proteinExistence type="predicted"/>
<dbReference type="EMBL" id="AF222894">
    <property type="protein sequence ID" value="AAF30572.1"/>
    <property type="molecule type" value="Genomic_DNA"/>
</dbReference>
<dbReference type="RefSeq" id="WP_004026528.1">
    <property type="nucleotide sequence ID" value="NC_002162.1"/>
</dbReference>
<dbReference type="SMR" id="Q9PQX8"/>
<dbReference type="STRING" id="273119.UU165.2"/>
<dbReference type="EnsemblBacteria" id="AAF30572">
    <property type="protein sequence ID" value="AAF30572"/>
    <property type="gene ID" value="UU165.2"/>
</dbReference>
<dbReference type="GeneID" id="29672694"/>
<dbReference type="KEGG" id="uur:UU165.2"/>
<dbReference type="HOGENOM" id="CLU_2025743_0_0_14"/>
<dbReference type="OrthoDB" id="9879663at2"/>
<dbReference type="Proteomes" id="UP000000423">
    <property type="component" value="Chromosome"/>
</dbReference>
<dbReference type="GO" id="GO:0005886">
    <property type="term" value="C:plasma membrane"/>
    <property type="evidence" value="ECO:0007669"/>
    <property type="project" value="UniProtKB-SubCell"/>
</dbReference>
<comment type="subcellular location">
    <subcellularLocation>
        <location evidence="2">Cell membrane</location>
        <topology evidence="2">Multi-pass membrane protein</topology>
    </subcellularLocation>
</comment>
<evidence type="ECO:0000255" key="1"/>
<evidence type="ECO:0000305" key="2"/>
<keyword id="KW-1003">Cell membrane</keyword>
<keyword id="KW-0472">Membrane</keyword>
<keyword id="KW-1185">Reference proteome</keyword>
<keyword id="KW-0812">Transmembrane</keyword>
<keyword id="KW-1133">Transmembrane helix</keyword>
<accession>Q9PQX8</accession>
<reference key="1">
    <citation type="journal article" date="2000" name="Nature">
        <title>The complete sequence of the mucosal pathogen Ureaplasma urealyticum.</title>
        <authorList>
            <person name="Glass J.I."/>
            <person name="Lefkowitz E.J."/>
            <person name="Glass J.S."/>
            <person name="Heiner C.R."/>
            <person name="Chen E.Y."/>
            <person name="Cassell G.H."/>
        </authorList>
    </citation>
    <scope>NUCLEOTIDE SEQUENCE [LARGE SCALE GENOMIC DNA]</scope>
    <source>
        <strain>ATCC 700970</strain>
    </source>
</reference>
<gene>
    <name type="ordered locus">UU165.2</name>
</gene>
<name>Y16A_UREPA</name>
<protein>
    <recommendedName>
        <fullName>Uncharacterized protein UU165.2</fullName>
    </recommendedName>
</protein>